<proteinExistence type="inferred from homology"/>
<feature type="chain" id="PRO_0000326711" description="Acylphosphatase">
    <location>
        <begin position="1"/>
        <end position="94"/>
    </location>
</feature>
<feature type="domain" description="Acylphosphatase-like" evidence="1">
    <location>
        <begin position="8"/>
        <end position="94"/>
    </location>
</feature>
<feature type="active site" evidence="1">
    <location>
        <position position="23"/>
    </location>
</feature>
<feature type="active site" evidence="1">
    <location>
        <position position="41"/>
    </location>
</feature>
<accession>Q0RDN6</accession>
<protein>
    <recommendedName>
        <fullName>Acylphosphatase</fullName>
        <ecNumber>3.6.1.7</ecNumber>
    </recommendedName>
    <alternativeName>
        <fullName>Acylphosphate phosphohydrolase</fullName>
    </alternativeName>
</protein>
<organism>
    <name type="scientific">Frankia alni (strain DSM 45986 / CECT 9034 / ACN14a)</name>
    <dbReference type="NCBI Taxonomy" id="326424"/>
    <lineage>
        <taxon>Bacteria</taxon>
        <taxon>Bacillati</taxon>
        <taxon>Actinomycetota</taxon>
        <taxon>Actinomycetes</taxon>
        <taxon>Frankiales</taxon>
        <taxon>Frankiaceae</taxon>
        <taxon>Frankia</taxon>
    </lineage>
</organism>
<reference key="1">
    <citation type="journal article" date="2007" name="Genome Res.">
        <title>Genome characteristics of facultatively symbiotic Frankia sp. strains reflect host range and host plant biogeography.</title>
        <authorList>
            <person name="Normand P."/>
            <person name="Lapierre P."/>
            <person name="Tisa L.S."/>
            <person name="Gogarten J.P."/>
            <person name="Alloisio N."/>
            <person name="Bagnarol E."/>
            <person name="Bassi C.A."/>
            <person name="Berry A.M."/>
            <person name="Bickhart D.M."/>
            <person name="Choisne N."/>
            <person name="Couloux A."/>
            <person name="Cournoyer B."/>
            <person name="Cruveiller S."/>
            <person name="Daubin V."/>
            <person name="Demange N."/>
            <person name="Francino M.P."/>
            <person name="Goltsman E."/>
            <person name="Huang Y."/>
            <person name="Kopp O.R."/>
            <person name="Labarre L."/>
            <person name="Lapidus A."/>
            <person name="Lavire C."/>
            <person name="Marechal J."/>
            <person name="Martinez M."/>
            <person name="Mastronunzio J.E."/>
            <person name="Mullin B.C."/>
            <person name="Niemann J."/>
            <person name="Pujic P."/>
            <person name="Rawnsley T."/>
            <person name="Rouy Z."/>
            <person name="Schenowitz C."/>
            <person name="Sellstedt A."/>
            <person name="Tavares F."/>
            <person name="Tomkins J.P."/>
            <person name="Vallenet D."/>
            <person name="Valverde C."/>
            <person name="Wall L.G."/>
            <person name="Wang Y."/>
            <person name="Medigue C."/>
            <person name="Benson D.R."/>
        </authorList>
    </citation>
    <scope>NUCLEOTIDE SEQUENCE [LARGE SCALE GENOMIC DNA]</scope>
    <source>
        <strain>DSM 45986 / CECT 9034 / ACN14a</strain>
    </source>
</reference>
<comment type="catalytic activity">
    <reaction>
        <text>an acyl phosphate + H2O = a carboxylate + phosphate + H(+)</text>
        <dbReference type="Rhea" id="RHEA:14965"/>
        <dbReference type="ChEBI" id="CHEBI:15377"/>
        <dbReference type="ChEBI" id="CHEBI:15378"/>
        <dbReference type="ChEBI" id="CHEBI:29067"/>
        <dbReference type="ChEBI" id="CHEBI:43474"/>
        <dbReference type="ChEBI" id="CHEBI:59918"/>
        <dbReference type="EC" id="3.6.1.7"/>
    </reaction>
</comment>
<comment type="similarity">
    <text evidence="2">Belongs to the acylphosphatase family.</text>
</comment>
<comment type="sequence caution" evidence="2">
    <conflict type="erroneous initiation">
        <sequence resource="EMBL-CDS" id="CAJ64430"/>
    </conflict>
</comment>
<evidence type="ECO:0000255" key="1">
    <source>
        <dbReference type="PROSITE-ProRule" id="PRU00520"/>
    </source>
</evidence>
<evidence type="ECO:0000305" key="2"/>
<sequence length="94" mass="10186">MPGPTVVRFTARVVGRVQGVGFRDYVRTRGRRLGLVGTATNMPDGAVVVIAEGGAPACQNLARLLVTGHTPGWTDRVEVVWQRAQGDLADFRRK</sequence>
<name>ACYP_FRAAA</name>
<gene>
    <name type="primary">acyP</name>
    <name type="ordered locus">FRAAL5798</name>
</gene>
<keyword id="KW-0378">Hydrolase</keyword>
<keyword id="KW-1185">Reference proteome</keyword>
<dbReference type="EC" id="3.6.1.7"/>
<dbReference type="EMBL" id="CT573213">
    <property type="protein sequence ID" value="CAJ64430.1"/>
    <property type="status" value="ALT_INIT"/>
    <property type="molecule type" value="Genomic_DNA"/>
</dbReference>
<dbReference type="SMR" id="Q0RDN6"/>
<dbReference type="STRING" id="326424.FRAAL5798"/>
<dbReference type="KEGG" id="fal:FRAAL5798"/>
<dbReference type="eggNOG" id="COG1254">
    <property type="taxonomic scope" value="Bacteria"/>
</dbReference>
<dbReference type="HOGENOM" id="CLU_141932_3_0_11"/>
<dbReference type="Proteomes" id="UP000000657">
    <property type="component" value="Chromosome"/>
</dbReference>
<dbReference type="GO" id="GO:0003998">
    <property type="term" value="F:acylphosphatase activity"/>
    <property type="evidence" value="ECO:0007669"/>
    <property type="project" value="UniProtKB-EC"/>
</dbReference>
<dbReference type="Gene3D" id="3.30.70.100">
    <property type="match status" value="1"/>
</dbReference>
<dbReference type="InterPro" id="IPR020456">
    <property type="entry name" value="Acylphosphatase"/>
</dbReference>
<dbReference type="InterPro" id="IPR001792">
    <property type="entry name" value="Acylphosphatase-like_dom"/>
</dbReference>
<dbReference type="InterPro" id="IPR036046">
    <property type="entry name" value="Acylphosphatase-like_dom_sf"/>
</dbReference>
<dbReference type="InterPro" id="IPR017968">
    <property type="entry name" value="Acylphosphatase_CS"/>
</dbReference>
<dbReference type="PANTHER" id="PTHR47268">
    <property type="entry name" value="ACYLPHOSPHATASE"/>
    <property type="match status" value="1"/>
</dbReference>
<dbReference type="PANTHER" id="PTHR47268:SF4">
    <property type="entry name" value="ACYLPHOSPHATASE"/>
    <property type="match status" value="1"/>
</dbReference>
<dbReference type="Pfam" id="PF00708">
    <property type="entry name" value="Acylphosphatase"/>
    <property type="match status" value="1"/>
</dbReference>
<dbReference type="SUPFAM" id="SSF54975">
    <property type="entry name" value="Acylphosphatase/BLUF domain-like"/>
    <property type="match status" value="1"/>
</dbReference>
<dbReference type="PROSITE" id="PS00150">
    <property type="entry name" value="ACYLPHOSPHATASE_1"/>
    <property type="match status" value="1"/>
</dbReference>
<dbReference type="PROSITE" id="PS51160">
    <property type="entry name" value="ACYLPHOSPHATASE_3"/>
    <property type="match status" value="1"/>
</dbReference>